<sequence>MNQDQEEEKPTCYDLLKVKHDLNKYNENIIRQLKMSHAPIDACEIFLFLLEKWCTTGGR</sequence>
<proteinExistence type="predicted"/>
<name>Y059A_ATV</name>
<dbReference type="EMBL" id="AJ888457">
    <property type="protein sequence ID" value="CAI59880.1"/>
    <property type="molecule type" value="Genomic_DNA"/>
</dbReference>
<dbReference type="RefSeq" id="YP_319835.1">
    <property type="nucleotide sequence ID" value="NC_007409.1"/>
</dbReference>
<dbReference type="SMR" id="Q3V4T4"/>
<dbReference type="GeneID" id="4484282"/>
<dbReference type="KEGG" id="vg:4484282"/>
<dbReference type="Proteomes" id="UP000002150">
    <property type="component" value="Genome"/>
</dbReference>
<organismHost>
    <name type="scientific">Acidianus convivator</name>
    <dbReference type="NCBI Taxonomy" id="269667"/>
</organismHost>
<feature type="chain" id="PRO_0000389046" description="Uncharacterized protein ORF59a">
    <location>
        <begin position="1"/>
        <end position="59"/>
    </location>
</feature>
<reference key="1">
    <citation type="journal article" date="2005" name="Nature">
        <title>Virology: independent virus development outside a host.</title>
        <authorList>
            <person name="Haring M."/>
            <person name="Vestergaard G."/>
            <person name="Rachel R."/>
            <person name="Chen L."/>
            <person name="Garrett R.A."/>
            <person name="Prangishvili D."/>
        </authorList>
    </citation>
    <scope>NUCLEOTIDE SEQUENCE [GENOMIC DNA]</scope>
</reference>
<protein>
    <recommendedName>
        <fullName>Uncharacterized protein ORF59a</fullName>
    </recommendedName>
</protein>
<organism>
    <name type="scientific">Acidianus two-tailed virus</name>
    <name type="common">ATV</name>
    <dbReference type="NCBI Taxonomy" id="315953"/>
    <lineage>
        <taxon>Viruses</taxon>
        <taxon>Viruses incertae sedis</taxon>
        <taxon>Bicaudaviridae</taxon>
        <taxon>Bicaudavirus</taxon>
    </lineage>
</organism>
<keyword id="KW-1185">Reference proteome</keyword>
<accession>Q3V4T4</accession>